<reference key="1">
    <citation type="journal article" date="2002" name="Proc. Natl. Acad. Sci. U.S.A.">
        <title>The genome sequence of Bifidobacterium longum reflects its adaptation to the human gastrointestinal tract.</title>
        <authorList>
            <person name="Schell M.A."/>
            <person name="Karmirantzou M."/>
            <person name="Snel B."/>
            <person name="Vilanova D."/>
            <person name="Berger B."/>
            <person name="Pessi G."/>
            <person name="Zwahlen M.-C."/>
            <person name="Desiere F."/>
            <person name="Bork P."/>
            <person name="Delley M."/>
            <person name="Pridmore R.D."/>
            <person name="Arigoni F."/>
        </authorList>
    </citation>
    <scope>NUCLEOTIDE SEQUENCE [LARGE SCALE GENOMIC DNA]</scope>
    <source>
        <strain>NCC 2705</strain>
    </source>
</reference>
<feature type="chain" id="PRO_0000190288" description="Recombination protein RecR">
    <location>
        <begin position="1"/>
        <end position="200"/>
    </location>
</feature>
<feature type="domain" description="Toprim" evidence="1">
    <location>
        <begin position="82"/>
        <end position="177"/>
    </location>
</feature>
<feature type="zinc finger region" description="C4-type" evidence="1">
    <location>
        <begin position="59"/>
        <end position="74"/>
    </location>
</feature>
<dbReference type="EMBL" id="AE014295">
    <property type="protein sequence ID" value="AAN24328.1"/>
    <property type="molecule type" value="Genomic_DNA"/>
</dbReference>
<dbReference type="RefSeq" id="NP_695692.1">
    <property type="nucleotide sequence ID" value="NC_004307.2"/>
</dbReference>
<dbReference type="RefSeq" id="WP_007051621.1">
    <property type="nucleotide sequence ID" value="NC_004307.2"/>
</dbReference>
<dbReference type="SMR" id="Q8G6Y1"/>
<dbReference type="STRING" id="206672.BL0499"/>
<dbReference type="EnsemblBacteria" id="AAN24328">
    <property type="protein sequence ID" value="AAN24328"/>
    <property type="gene ID" value="BL0499"/>
</dbReference>
<dbReference type="GeneID" id="69577386"/>
<dbReference type="KEGG" id="blo:BL0499"/>
<dbReference type="PATRIC" id="fig|206672.9.peg.1240"/>
<dbReference type="HOGENOM" id="CLU_060739_1_0_11"/>
<dbReference type="OrthoDB" id="9802672at2"/>
<dbReference type="PhylomeDB" id="Q8G6Y1"/>
<dbReference type="Proteomes" id="UP000000439">
    <property type="component" value="Chromosome"/>
</dbReference>
<dbReference type="GO" id="GO:0003677">
    <property type="term" value="F:DNA binding"/>
    <property type="evidence" value="ECO:0007669"/>
    <property type="project" value="UniProtKB-UniRule"/>
</dbReference>
<dbReference type="GO" id="GO:0008270">
    <property type="term" value="F:zinc ion binding"/>
    <property type="evidence" value="ECO:0007669"/>
    <property type="project" value="UniProtKB-KW"/>
</dbReference>
<dbReference type="GO" id="GO:0006310">
    <property type="term" value="P:DNA recombination"/>
    <property type="evidence" value="ECO:0007669"/>
    <property type="project" value="UniProtKB-UniRule"/>
</dbReference>
<dbReference type="GO" id="GO:0006281">
    <property type="term" value="P:DNA repair"/>
    <property type="evidence" value="ECO:0007669"/>
    <property type="project" value="UniProtKB-UniRule"/>
</dbReference>
<dbReference type="CDD" id="cd01025">
    <property type="entry name" value="TOPRIM_recR"/>
    <property type="match status" value="1"/>
</dbReference>
<dbReference type="Gene3D" id="3.40.1360.10">
    <property type="match status" value="1"/>
</dbReference>
<dbReference type="Gene3D" id="6.10.250.240">
    <property type="match status" value="1"/>
</dbReference>
<dbReference type="Gene3D" id="1.10.8.420">
    <property type="entry name" value="RecR Domain 1"/>
    <property type="match status" value="1"/>
</dbReference>
<dbReference type="HAMAP" id="MF_00017">
    <property type="entry name" value="RecR"/>
    <property type="match status" value="1"/>
</dbReference>
<dbReference type="InterPro" id="IPR000093">
    <property type="entry name" value="DNA_Rcmb_RecR"/>
</dbReference>
<dbReference type="InterPro" id="IPR023627">
    <property type="entry name" value="Rcmb_RecR"/>
</dbReference>
<dbReference type="InterPro" id="IPR015967">
    <property type="entry name" value="Rcmb_RecR_Znf"/>
</dbReference>
<dbReference type="InterPro" id="IPR006171">
    <property type="entry name" value="TOPRIM_dom"/>
</dbReference>
<dbReference type="InterPro" id="IPR034137">
    <property type="entry name" value="TOPRIM_RecR"/>
</dbReference>
<dbReference type="NCBIfam" id="TIGR00615">
    <property type="entry name" value="recR"/>
    <property type="match status" value="1"/>
</dbReference>
<dbReference type="PANTHER" id="PTHR30446">
    <property type="entry name" value="RECOMBINATION PROTEIN RECR"/>
    <property type="match status" value="1"/>
</dbReference>
<dbReference type="PANTHER" id="PTHR30446:SF0">
    <property type="entry name" value="RECOMBINATION PROTEIN RECR"/>
    <property type="match status" value="1"/>
</dbReference>
<dbReference type="Pfam" id="PF21175">
    <property type="entry name" value="RecR_C"/>
    <property type="match status" value="1"/>
</dbReference>
<dbReference type="Pfam" id="PF21176">
    <property type="entry name" value="RecR_HhH"/>
    <property type="match status" value="1"/>
</dbReference>
<dbReference type="Pfam" id="PF02132">
    <property type="entry name" value="RecR_ZnF"/>
    <property type="match status" value="1"/>
</dbReference>
<dbReference type="Pfam" id="PF13662">
    <property type="entry name" value="Toprim_4"/>
    <property type="match status" value="1"/>
</dbReference>
<dbReference type="SMART" id="SM00493">
    <property type="entry name" value="TOPRIM"/>
    <property type="match status" value="1"/>
</dbReference>
<dbReference type="SUPFAM" id="SSF111304">
    <property type="entry name" value="Recombination protein RecR"/>
    <property type="match status" value="1"/>
</dbReference>
<dbReference type="PROSITE" id="PS01300">
    <property type="entry name" value="RECR"/>
    <property type="match status" value="1"/>
</dbReference>
<dbReference type="PROSITE" id="PS50880">
    <property type="entry name" value="TOPRIM"/>
    <property type="match status" value="1"/>
</dbReference>
<protein>
    <recommendedName>
        <fullName evidence="1">Recombination protein RecR</fullName>
    </recommendedName>
</protein>
<gene>
    <name evidence="1" type="primary">recR</name>
    <name type="ordered locus">BL0499</name>
</gene>
<sequence>MALAYDGAIQRLIDAFGRLPGIGPKGAQRIAFYMLSAPEDEARDLAEAIEEVKAKIRFCDICGNVCESSPCPVCADPRRDRSVICVVEEPKDVMSIERTREYHGLYHVLGGAINPMANVGPADLRIPGLLKRLEGDEVKEVIMALDPNIEGEATTSYLTQLLRPVGVKVTRLASGLPVGSDLEYADEITLGRALAGRREA</sequence>
<organism>
    <name type="scientific">Bifidobacterium longum (strain NCC 2705)</name>
    <dbReference type="NCBI Taxonomy" id="206672"/>
    <lineage>
        <taxon>Bacteria</taxon>
        <taxon>Bacillati</taxon>
        <taxon>Actinomycetota</taxon>
        <taxon>Actinomycetes</taxon>
        <taxon>Bifidobacteriales</taxon>
        <taxon>Bifidobacteriaceae</taxon>
        <taxon>Bifidobacterium</taxon>
    </lineage>
</organism>
<name>RECR_BIFLO</name>
<accession>Q8G6Y1</accession>
<comment type="function">
    <text evidence="1">May play a role in DNA repair. It seems to be involved in an RecBC-independent recombinational process of DNA repair. It may act with RecF and RecO.</text>
</comment>
<comment type="similarity">
    <text evidence="1">Belongs to the RecR family.</text>
</comment>
<proteinExistence type="inferred from homology"/>
<keyword id="KW-0227">DNA damage</keyword>
<keyword id="KW-0233">DNA recombination</keyword>
<keyword id="KW-0234">DNA repair</keyword>
<keyword id="KW-0479">Metal-binding</keyword>
<keyword id="KW-1185">Reference proteome</keyword>
<keyword id="KW-0862">Zinc</keyword>
<keyword id="KW-0863">Zinc-finger</keyword>
<evidence type="ECO:0000255" key="1">
    <source>
        <dbReference type="HAMAP-Rule" id="MF_00017"/>
    </source>
</evidence>